<reference key="1">
    <citation type="submission" date="2009-01" db="EMBL/GenBank/DDBJ databases">
        <title>Complete sequence of chromosome of Methylobacterium nodulans ORS 2060.</title>
        <authorList>
            <consortium name="US DOE Joint Genome Institute"/>
            <person name="Lucas S."/>
            <person name="Copeland A."/>
            <person name="Lapidus A."/>
            <person name="Glavina del Rio T."/>
            <person name="Dalin E."/>
            <person name="Tice H."/>
            <person name="Bruce D."/>
            <person name="Goodwin L."/>
            <person name="Pitluck S."/>
            <person name="Sims D."/>
            <person name="Brettin T."/>
            <person name="Detter J.C."/>
            <person name="Han C."/>
            <person name="Larimer F."/>
            <person name="Land M."/>
            <person name="Hauser L."/>
            <person name="Kyrpides N."/>
            <person name="Ivanova N."/>
            <person name="Marx C.J."/>
            <person name="Richardson P."/>
        </authorList>
    </citation>
    <scope>NUCLEOTIDE SEQUENCE [LARGE SCALE GENOMIC DNA]</scope>
    <source>
        <strain>LMG 21967 / CNCM I-2342 / ORS 2060</strain>
    </source>
</reference>
<protein>
    <recommendedName>
        <fullName evidence="1">Small ribosomal subunit protein uS9</fullName>
    </recommendedName>
    <alternativeName>
        <fullName evidence="2">30S ribosomal protein S9</fullName>
    </alternativeName>
</protein>
<organism>
    <name type="scientific">Methylobacterium nodulans (strain LMG 21967 / CNCM I-2342 / ORS 2060)</name>
    <dbReference type="NCBI Taxonomy" id="460265"/>
    <lineage>
        <taxon>Bacteria</taxon>
        <taxon>Pseudomonadati</taxon>
        <taxon>Pseudomonadota</taxon>
        <taxon>Alphaproteobacteria</taxon>
        <taxon>Hyphomicrobiales</taxon>
        <taxon>Methylobacteriaceae</taxon>
        <taxon>Methylobacterium</taxon>
    </lineage>
</organism>
<evidence type="ECO:0000255" key="1">
    <source>
        <dbReference type="HAMAP-Rule" id="MF_00532"/>
    </source>
</evidence>
<evidence type="ECO:0000305" key="2"/>
<gene>
    <name evidence="1" type="primary">rpsI</name>
    <name type="ordered locus">Mnod_0149</name>
</gene>
<proteinExistence type="inferred from homology"/>
<sequence>MATLQSLADLGQANKAALATADTEAPVHVQKLDAQGRAYATGKRKDAVARVWIKPGAGTITVNDRPVDTYFARPVLRMILQQPLHVANRVDQYDIVVTVTGGGLSGQAGAVRHGLARALTYYEPELRSPLKREGFLTRDPRVVERKKYGRKKARRSFQFSKR</sequence>
<name>RS9_METNO</name>
<keyword id="KW-1185">Reference proteome</keyword>
<keyword id="KW-0687">Ribonucleoprotein</keyword>
<keyword id="KW-0689">Ribosomal protein</keyword>
<dbReference type="EMBL" id="CP001349">
    <property type="protein sequence ID" value="ACL55195.1"/>
    <property type="molecule type" value="Genomic_DNA"/>
</dbReference>
<dbReference type="RefSeq" id="WP_015926908.1">
    <property type="nucleotide sequence ID" value="NC_011894.1"/>
</dbReference>
<dbReference type="SMR" id="B8IUF0"/>
<dbReference type="STRING" id="460265.Mnod_0149"/>
<dbReference type="KEGG" id="mno:Mnod_0149"/>
<dbReference type="eggNOG" id="COG0103">
    <property type="taxonomic scope" value="Bacteria"/>
</dbReference>
<dbReference type="HOGENOM" id="CLU_046483_2_0_5"/>
<dbReference type="OrthoDB" id="9803965at2"/>
<dbReference type="Proteomes" id="UP000008207">
    <property type="component" value="Chromosome"/>
</dbReference>
<dbReference type="GO" id="GO:0022627">
    <property type="term" value="C:cytosolic small ribosomal subunit"/>
    <property type="evidence" value="ECO:0007669"/>
    <property type="project" value="TreeGrafter"/>
</dbReference>
<dbReference type="GO" id="GO:0003723">
    <property type="term" value="F:RNA binding"/>
    <property type="evidence" value="ECO:0007669"/>
    <property type="project" value="TreeGrafter"/>
</dbReference>
<dbReference type="GO" id="GO:0003735">
    <property type="term" value="F:structural constituent of ribosome"/>
    <property type="evidence" value="ECO:0007669"/>
    <property type="project" value="InterPro"/>
</dbReference>
<dbReference type="GO" id="GO:0006412">
    <property type="term" value="P:translation"/>
    <property type="evidence" value="ECO:0007669"/>
    <property type="project" value="UniProtKB-UniRule"/>
</dbReference>
<dbReference type="FunFam" id="3.30.230.10:FF:000001">
    <property type="entry name" value="30S ribosomal protein S9"/>
    <property type="match status" value="1"/>
</dbReference>
<dbReference type="Gene3D" id="3.30.230.10">
    <property type="match status" value="1"/>
</dbReference>
<dbReference type="HAMAP" id="MF_00532_B">
    <property type="entry name" value="Ribosomal_uS9_B"/>
    <property type="match status" value="1"/>
</dbReference>
<dbReference type="InterPro" id="IPR020568">
    <property type="entry name" value="Ribosomal_Su5_D2-typ_SF"/>
</dbReference>
<dbReference type="InterPro" id="IPR000754">
    <property type="entry name" value="Ribosomal_uS9"/>
</dbReference>
<dbReference type="InterPro" id="IPR023035">
    <property type="entry name" value="Ribosomal_uS9_bac/plastid"/>
</dbReference>
<dbReference type="InterPro" id="IPR020574">
    <property type="entry name" value="Ribosomal_uS9_CS"/>
</dbReference>
<dbReference type="InterPro" id="IPR014721">
    <property type="entry name" value="Ribsml_uS5_D2-typ_fold_subgr"/>
</dbReference>
<dbReference type="NCBIfam" id="NF001099">
    <property type="entry name" value="PRK00132.1"/>
    <property type="match status" value="1"/>
</dbReference>
<dbReference type="PANTHER" id="PTHR21569">
    <property type="entry name" value="RIBOSOMAL PROTEIN S9"/>
    <property type="match status" value="1"/>
</dbReference>
<dbReference type="PANTHER" id="PTHR21569:SF1">
    <property type="entry name" value="SMALL RIBOSOMAL SUBUNIT PROTEIN US9M"/>
    <property type="match status" value="1"/>
</dbReference>
<dbReference type="Pfam" id="PF00380">
    <property type="entry name" value="Ribosomal_S9"/>
    <property type="match status" value="1"/>
</dbReference>
<dbReference type="SUPFAM" id="SSF54211">
    <property type="entry name" value="Ribosomal protein S5 domain 2-like"/>
    <property type="match status" value="1"/>
</dbReference>
<dbReference type="PROSITE" id="PS00360">
    <property type="entry name" value="RIBOSOMAL_S9"/>
    <property type="match status" value="1"/>
</dbReference>
<comment type="similarity">
    <text evidence="1">Belongs to the universal ribosomal protein uS9 family.</text>
</comment>
<accession>B8IUF0</accession>
<feature type="chain" id="PRO_1000146461" description="Small ribosomal subunit protein uS9">
    <location>
        <begin position="1"/>
        <end position="162"/>
    </location>
</feature>